<evidence type="ECO:0000255" key="1">
    <source>
        <dbReference type="HAMAP-Rule" id="MF_00159"/>
    </source>
</evidence>
<keyword id="KW-0004">4Fe-4S</keyword>
<keyword id="KW-0408">Iron</keyword>
<keyword id="KW-0411">Iron-sulfur</keyword>
<keyword id="KW-0414">Isoprene biosynthesis</keyword>
<keyword id="KW-0479">Metal-binding</keyword>
<keyword id="KW-0560">Oxidoreductase</keyword>
<name>ISPG_BRUA1</name>
<accession>B2S7K6</accession>
<sequence>MSSETVSYFSHPFPRRQSVGVSVGGVIVGGSAPVVVQSMTNTDTADVDSTVAQVAALHRAGSEIVRITVDRDESAAAVPKIRERLERLGHDVPLVGDFHYIGHKLLADHPACAEALSKYRINPGNVGFKDKKDKQFADIVEMAIRYDKPVRIGVNWGSLDQELLTALMDRNQAEGAPLSAQDVMREAIVQSALISANLAEEIGLGRDKIILSAKVSQVQDLIAVYTMLAQRSNHALHLGLTEAGMGTKGIVASSAAMGILLQQGIGDTIRISLTPEPGGDRTREVQVAQELLQTMGFRQFVPIVAACPGCGRTTSTVFQELAQTIQEDIRRNMPLWREKYPGVEALSVAVMGCIVNGPGESKHADIGISLPGTGETPSAPVFVDGKKVTTLRGPGIAEDFQKMVADYIENRFGLGRKIAS</sequence>
<reference key="1">
    <citation type="journal article" date="2008" name="PLoS ONE">
        <title>Genome sequence of Brucella abortus vaccine strain S19 compared to virulent strains yields candidate virulence genes.</title>
        <authorList>
            <person name="Crasta O.R."/>
            <person name="Folkerts O."/>
            <person name="Fei Z."/>
            <person name="Mane S.P."/>
            <person name="Evans C."/>
            <person name="Martino-Catt S."/>
            <person name="Bricker B."/>
            <person name="Yu G."/>
            <person name="Du L."/>
            <person name="Sobral B.W."/>
        </authorList>
    </citation>
    <scope>NUCLEOTIDE SEQUENCE [LARGE SCALE GENOMIC DNA]</scope>
    <source>
        <strain>S19</strain>
    </source>
</reference>
<organism>
    <name type="scientific">Brucella abortus (strain S19)</name>
    <dbReference type="NCBI Taxonomy" id="430066"/>
    <lineage>
        <taxon>Bacteria</taxon>
        <taxon>Pseudomonadati</taxon>
        <taxon>Pseudomonadota</taxon>
        <taxon>Alphaproteobacteria</taxon>
        <taxon>Hyphomicrobiales</taxon>
        <taxon>Brucellaceae</taxon>
        <taxon>Brucella/Ochrobactrum group</taxon>
        <taxon>Brucella</taxon>
    </lineage>
</organism>
<proteinExistence type="inferred from homology"/>
<feature type="chain" id="PRO_1000097150" description="4-hydroxy-3-methylbut-2-en-1-yl diphosphate synthase (flavodoxin)">
    <location>
        <begin position="1"/>
        <end position="420"/>
    </location>
</feature>
<feature type="binding site" evidence="1">
    <location>
        <position position="307"/>
    </location>
    <ligand>
        <name>[4Fe-4S] cluster</name>
        <dbReference type="ChEBI" id="CHEBI:49883"/>
    </ligand>
</feature>
<feature type="binding site" evidence="1">
    <location>
        <position position="310"/>
    </location>
    <ligand>
        <name>[4Fe-4S] cluster</name>
        <dbReference type="ChEBI" id="CHEBI:49883"/>
    </ligand>
</feature>
<feature type="binding site" evidence="1">
    <location>
        <position position="353"/>
    </location>
    <ligand>
        <name>[4Fe-4S] cluster</name>
        <dbReference type="ChEBI" id="CHEBI:49883"/>
    </ligand>
</feature>
<feature type="binding site" evidence="1">
    <location>
        <position position="360"/>
    </location>
    <ligand>
        <name>[4Fe-4S] cluster</name>
        <dbReference type="ChEBI" id="CHEBI:49883"/>
    </ligand>
</feature>
<dbReference type="EC" id="1.17.7.3" evidence="1"/>
<dbReference type="EMBL" id="CP000887">
    <property type="protein sequence ID" value="ACD73153.1"/>
    <property type="molecule type" value="Genomic_DNA"/>
</dbReference>
<dbReference type="RefSeq" id="WP_002966963.1">
    <property type="nucleotide sequence ID" value="NC_010742.1"/>
</dbReference>
<dbReference type="SMR" id="B2S7K6"/>
<dbReference type="GeneID" id="93017877"/>
<dbReference type="KEGG" id="bmc:BAbS19_I16710"/>
<dbReference type="HOGENOM" id="CLU_042258_1_0_5"/>
<dbReference type="UniPathway" id="UPA00056">
    <property type="reaction ID" value="UER00096"/>
</dbReference>
<dbReference type="Proteomes" id="UP000002565">
    <property type="component" value="Chromosome 1"/>
</dbReference>
<dbReference type="GO" id="GO:0051539">
    <property type="term" value="F:4 iron, 4 sulfur cluster binding"/>
    <property type="evidence" value="ECO:0007669"/>
    <property type="project" value="UniProtKB-UniRule"/>
</dbReference>
<dbReference type="GO" id="GO:0046429">
    <property type="term" value="F:4-hydroxy-3-methylbut-2-en-1-yl diphosphate synthase activity (ferredoxin)"/>
    <property type="evidence" value="ECO:0007669"/>
    <property type="project" value="UniProtKB-UniRule"/>
</dbReference>
<dbReference type="GO" id="GO:0141197">
    <property type="term" value="F:4-hydroxy-3-methylbut-2-enyl-diphosphate synthase activity (flavodoxin)"/>
    <property type="evidence" value="ECO:0007669"/>
    <property type="project" value="UniProtKB-EC"/>
</dbReference>
<dbReference type="GO" id="GO:0005506">
    <property type="term" value="F:iron ion binding"/>
    <property type="evidence" value="ECO:0007669"/>
    <property type="project" value="InterPro"/>
</dbReference>
<dbReference type="GO" id="GO:0019288">
    <property type="term" value="P:isopentenyl diphosphate biosynthetic process, methylerythritol 4-phosphate pathway"/>
    <property type="evidence" value="ECO:0007669"/>
    <property type="project" value="UniProtKB-UniRule"/>
</dbReference>
<dbReference type="GO" id="GO:0016114">
    <property type="term" value="P:terpenoid biosynthetic process"/>
    <property type="evidence" value="ECO:0007669"/>
    <property type="project" value="InterPro"/>
</dbReference>
<dbReference type="FunFam" id="3.30.413.10:FF:000012">
    <property type="entry name" value="4-hydroxy-3-methylbut-2-en-1-yl diphosphate synthase (flavodoxin)"/>
    <property type="match status" value="1"/>
</dbReference>
<dbReference type="Gene3D" id="3.20.20.20">
    <property type="entry name" value="Dihydropteroate synthase-like"/>
    <property type="match status" value="1"/>
</dbReference>
<dbReference type="Gene3D" id="3.30.413.10">
    <property type="entry name" value="Sulfite Reductase Hemoprotein, domain 1"/>
    <property type="match status" value="1"/>
</dbReference>
<dbReference type="HAMAP" id="MF_00159">
    <property type="entry name" value="IspG"/>
    <property type="match status" value="1"/>
</dbReference>
<dbReference type="InterPro" id="IPR011005">
    <property type="entry name" value="Dihydropteroate_synth-like_sf"/>
</dbReference>
<dbReference type="InterPro" id="IPR016425">
    <property type="entry name" value="IspG_bac"/>
</dbReference>
<dbReference type="InterPro" id="IPR004588">
    <property type="entry name" value="IspG_bac-typ"/>
</dbReference>
<dbReference type="InterPro" id="IPR045854">
    <property type="entry name" value="NO2/SO3_Rdtase_4Fe4S_sf"/>
</dbReference>
<dbReference type="NCBIfam" id="TIGR00612">
    <property type="entry name" value="ispG_gcpE"/>
    <property type="match status" value="1"/>
</dbReference>
<dbReference type="NCBIfam" id="NF001540">
    <property type="entry name" value="PRK00366.1"/>
    <property type="match status" value="1"/>
</dbReference>
<dbReference type="PANTHER" id="PTHR30454">
    <property type="entry name" value="4-HYDROXY-3-METHYLBUT-2-EN-1-YL DIPHOSPHATE SYNTHASE"/>
    <property type="match status" value="1"/>
</dbReference>
<dbReference type="PANTHER" id="PTHR30454:SF0">
    <property type="entry name" value="4-HYDROXY-3-METHYLBUT-2-EN-1-YL DIPHOSPHATE SYNTHASE (FERREDOXIN), CHLOROPLASTIC"/>
    <property type="match status" value="1"/>
</dbReference>
<dbReference type="Pfam" id="PF04551">
    <property type="entry name" value="GcpE"/>
    <property type="match status" value="1"/>
</dbReference>
<dbReference type="PIRSF" id="PIRSF004640">
    <property type="entry name" value="IspG"/>
    <property type="match status" value="1"/>
</dbReference>
<dbReference type="SUPFAM" id="SSF56014">
    <property type="entry name" value="Nitrite and sulphite reductase 4Fe-4S domain-like"/>
    <property type="match status" value="1"/>
</dbReference>
<comment type="function">
    <text evidence="1">Converts 2C-methyl-D-erythritol 2,4-cyclodiphosphate (ME-2,4cPP) into 1-hydroxy-2-methyl-2-(E)-butenyl 4-diphosphate.</text>
</comment>
<comment type="catalytic activity">
    <reaction evidence="1">
        <text>(2E)-4-hydroxy-3-methylbut-2-enyl diphosphate + oxidized [flavodoxin] + H2O + 2 H(+) = 2-C-methyl-D-erythritol 2,4-cyclic diphosphate + reduced [flavodoxin]</text>
        <dbReference type="Rhea" id="RHEA:43604"/>
        <dbReference type="Rhea" id="RHEA-COMP:10622"/>
        <dbReference type="Rhea" id="RHEA-COMP:10623"/>
        <dbReference type="ChEBI" id="CHEBI:15377"/>
        <dbReference type="ChEBI" id="CHEBI:15378"/>
        <dbReference type="ChEBI" id="CHEBI:57618"/>
        <dbReference type="ChEBI" id="CHEBI:58210"/>
        <dbReference type="ChEBI" id="CHEBI:58483"/>
        <dbReference type="ChEBI" id="CHEBI:128753"/>
        <dbReference type="EC" id="1.17.7.3"/>
    </reaction>
</comment>
<comment type="cofactor">
    <cofactor evidence="1">
        <name>[4Fe-4S] cluster</name>
        <dbReference type="ChEBI" id="CHEBI:49883"/>
    </cofactor>
    <text evidence="1">Binds 1 [4Fe-4S] cluster.</text>
</comment>
<comment type="pathway">
    <text evidence="1">Isoprenoid biosynthesis; isopentenyl diphosphate biosynthesis via DXP pathway; isopentenyl diphosphate from 1-deoxy-D-xylulose 5-phosphate: step 5/6.</text>
</comment>
<comment type="similarity">
    <text evidence="1">Belongs to the IspG family.</text>
</comment>
<gene>
    <name evidence="1" type="primary">ispG</name>
    <name type="ordered locus">BAbS19_I16710</name>
</gene>
<protein>
    <recommendedName>
        <fullName evidence="1">4-hydroxy-3-methylbut-2-en-1-yl diphosphate synthase (flavodoxin)</fullName>
        <ecNumber evidence="1">1.17.7.3</ecNumber>
    </recommendedName>
    <alternativeName>
        <fullName evidence="1">1-hydroxy-2-methyl-2-(E)-butenyl 4-diphosphate synthase</fullName>
    </alternativeName>
</protein>